<organism>
    <name type="scientific">Influenza A virus (strain A/Equine/Jillin/1/1989 H3N8)</name>
    <dbReference type="NCBI Taxonomy" id="385585"/>
    <lineage>
        <taxon>Viruses</taxon>
        <taxon>Riboviria</taxon>
        <taxon>Orthornavirae</taxon>
        <taxon>Negarnaviricota</taxon>
        <taxon>Polyploviricotina</taxon>
        <taxon>Insthoviricetes</taxon>
        <taxon>Articulavirales</taxon>
        <taxon>Orthomyxoviridae</taxon>
        <taxon>Alphainfluenzavirus</taxon>
        <taxon>Alphainfluenzavirus influenzae</taxon>
        <taxon>Influenza A virus</taxon>
    </lineage>
</organism>
<comment type="function">
    <text evidence="1">Mediates the nuclear export of encapsidated genomic RNAs (ribonucleoproteins, RNPs). Acts as an adapter between viral RNPs complexes and the nuclear export machinery of the cell. Possesses no intrinsic RNA-binding activity, but includes a C-terminal M1-binding domain. This domain is believed to allow recognition of RNPs bound to the protein M1. Since protein M1 is not available in large quantities before late stages of infection, such an indirect recognition mechanism probably ensures that genomic RNPs are not exported from the host nucleus until sufficient quantities of viral mRNA and progeny genomic RNA have been synthesized. Furthermore, the RNPs enter the host cytoplasm only when associated with the M1 protein that is necessary to guide them to the plasma membrane. May down-regulate viral RNA synthesis when overproduced.</text>
</comment>
<comment type="subunit">
    <text evidence="1">Interacts with protein M1. May interact with host nucleoporin RAB/HRB and exportin XPO1/CRM1.</text>
</comment>
<comment type="subcellular location">
    <subcellularLocation>
        <location evidence="1">Virion</location>
    </subcellularLocation>
    <subcellularLocation>
        <location evidence="1">Host nucleus</location>
    </subcellularLocation>
</comment>
<comment type="alternative products">
    <event type="alternative splicing"/>
    <isoform>
        <id>Q04265-1</id>
        <name>NEP</name>
        <name>NS2</name>
        <sequence type="displayed"/>
    </isoform>
    <isoform>
        <id>Q04262-1</id>
        <name>NS1</name>
        <sequence type="external"/>
    </isoform>
</comment>
<comment type="similarity">
    <text evidence="1">Belongs to the influenza viruses NEP family.</text>
</comment>
<gene>
    <name evidence="1" type="primary">NS</name>
</gene>
<keyword id="KW-0025">Alternative splicing</keyword>
<keyword id="KW-1048">Host nucleus</keyword>
<keyword id="KW-0945">Host-virus interaction</keyword>
<keyword id="KW-0813">Transport</keyword>
<keyword id="KW-0946">Virion</keyword>
<name>NEP_I89A7</name>
<proteinExistence type="inferred from homology"/>
<evidence type="ECO:0000255" key="1">
    <source>
        <dbReference type="HAMAP-Rule" id="MF_04067"/>
    </source>
</evidence>
<sequence length="121" mass="14288">MDSNTTTSFQDILQRMSKMQLESSSVDLNGMITQFERLKIYRDSLGESVMRMGDLHSLQNRNATWRDELSQKFEEIRWLIAECRNILTKTENSFEQITFLQALQLLLEVESEIRTFSFQLI</sequence>
<dbReference type="EMBL" id="M65020">
    <property type="protein sequence ID" value="AAA43492.1"/>
    <property type="molecule type" value="Other_RNA"/>
</dbReference>
<dbReference type="PIR" id="B45575">
    <property type="entry name" value="B45575"/>
</dbReference>
<dbReference type="SMR" id="Q04265"/>
<dbReference type="Proteomes" id="UP000130281">
    <property type="component" value="Genome"/>
</dbReference>
<dbReference type="GO" id="GO:0042025">
    <property type="term" value="C:host cell nucleus"/>
    <property type="evidence" value="ECO:0007669"/>
    <property type="project" value="UniProtKB-SubCell"/>
</dbReference>
<dbReference type="GO" id="GO:0044423">
    <property type="term" value="C:virion component"/>
    <property type="evidence" value="ECO:0007669"/>
    <property type="project" value="UniProtKB-UniRule"/>
</dbReference>
<dbReference type="GO" id="GO:0039675">
    <property type="term" value="P:exit of virus from host cell nucleus through nuclear pore"/>
    <property type="evidence" value="ECO:0007669"/>
    <property type="project" value="UniProtKB-UniRule"/>
</dbReference>
<dbReference type="Gene3D" id="1.10.287.230">
    <property type="match status" value="1"/>
</dbReference>
<dbReference type="HAMAP" id="MF_04067">
    <property type="entry name" value="INFV_NEP"/>
    <property type="match status" value="1"/>
</dbReference>
<dbReference type="InterPro" id="IPR000968">
    <property type="entry name" value="Flu_NS2"/>
</dbReference>
<dbReference type="Pfam" id="PF00601">
    <property type="entry name" value="Flu_NS2"/>
    <property type="match status" value="1"/>
</dbReference>
<dbReference type="SUPFAM" id="SSF101156">
    <property type="entry name" value="Nonstructural protein ns2, Nep, M1-binding domain"/>
    <property type="match status" value="1"/>
</dbReference>
<feature type="chain" id="PRO_0000324232" description="Nuclear export protein">
    <location>
        <begin position="1"/>
        <end position="121"/>
    </location>
</feature>
<feature type="short sequence motif" description="Nuclear export signal" evidence="1">
    <location>
        <begin position="12"/>
        <end position="21"/>
    </location>
</feature>
<feature type="short sequence motif" description="Nuclear export signal" evidence="1">
    <location>
        <begin position="85"/>
        <end position="94"/>
    </location>
</feature>
<protein>
    <recommendedName>
        <fullName evidence="1">Nuclear export protein</fullName>
        <shortName evidence="1">NEP</shortName>
    </recommendedName>
    <alternativeName>
        <fullName evidence="1">Non-structural protein 2</fullName>
        <shortName evidence="1">NS2</shortName>
    </alternativeName>
</protein>
<reference key="1">
    <citation type="submission" date="1991-06" db="EMBL/GenBank/DDBJ databases">
        <title>Emergence of a new influenza A virus in horses from avian sources.</title>
        <authorList>
            <person name="Guo Y."/>
            <person name="Wang M.G."/>
            <person name="Kawaoka Y."/>
            <person name="Gorman O.T."/>
            <person name="Ito T."/>
            <person name="Webster R.G."/>
        </authorList>
    </citation>
    <scope>NUCLEOTIDE SEQUENCE</scope>
</reference>
<organismHost>
    <name type="scientific">Aves</name>
    <dbReference type="NCBI Taxonomy" id="8782"/>
</organismHost>
<organismHost>
    <name type="scientific">Equus caballus</name>
    <name type="common">Horse</name>
    <dbReference type="NCBI Taxonomy" id="9796"/>
</organismHost>
<accession>Q04265</accession>